<accession>Q9D0U1</accession>
<organism>
    <name type="scientific">Mus musculus</name>
    <name type="common">Mouse</name>
    <dbReference type="NCBI Taxonomy" id="10090"/>
    <lineage>
        <taxon>Eukaryota</taxon>
        <taxon>Metazoa</taxon>
        <taxon>Chordata</taxon>
        <taxon>Craniata</taxon>
        <taxon>Vertebrata</taxon>
        <taxon>Euteleostomi</taxon>
        <taxon>Mammalia</taxon>
        <taxon>Eutheria</taxon>
        <taxon>Euarchontoglires</taxon>
        <taxon>Glires</taxon>
        <taxon>Rodentia</taxon>
        <taxon>Myomorpha</taxon>
        <taxon>Muroidea</taxon>
        <taxon>Muridae</taxon>
        <taxon>Murinae</taxon>
        <taxon>Mus</taxon>
        <taxon>Mus</taxon>
    </lineage>
</organism>
<comment type="function">
    <text evidence="2">Catalyzes the formation of 3-(3-amino-3-carboxypropyl)uridine (acp3U) at position 20a in the D-loop of several cytoplasmic tRNAs (acp3U(20a)). Also has a weak activity to form acp3U at position 20 in the D-loop of tRNAs (acp3U(20)). Involved in glycoRNA biosynthesis by mediating formation of acp3U, which acts as an attachment site for N-glycans on tRNAs. GlycoRNAs consist of RNAs modified with secretory N-glycans that are presented on the cell surface.</text>
</comment>
<comment type="catalytic activity">
    <reaction evidence="2">
        <text>a uridine in tRNA + S-adenosyl-L-methionine = a 3-[(3S)-3-amino-3-carboxypropyl]uridine in tRNA + S-methyl-5'-thioadenosine + H(+)</text>
        <dbReference type="Rhea" id="RHEA:62432"/>
        <dbReference type="Rhea" id="RHEA-COMP:13339"/>
        <dbReference type="Rhea" id="RHEA-COMP:16092"/>
        <dbReference type="ChEBI" id="CHEBI:15378"/>
        <dbReference type="ChEBI" id="CHEBI:17509"/>
        <dbReference type="ChEBI" id="CHEBI:59789"/>
        <dbReference type="ChEBI" id="CHEBI:65315"/>
        <dbReference type="ChEBI" id="CHEBI:82930"/>
        <dbReference type="EC" id="2.5.1.25"/>
    </reaction>
</comment>
<comment type="subcellular location">
    <subcellularLocation>
        <location evidence="2">Nucleus</location>
    </subcellularLocation>
    <subcellularLocation>
        <location evidence="2">Cytoplasm</location>
    </subcellularLocation>
</comment>
<comment type="similarity">
    <text evidence="4">Belongs to the TDD superfamily. DTWD2 family.</text>
</comment>
<gene>
    <name evidence="5" type="primary">Dtwd2</name>
</gene>
<evidence type="ECO:0000250" key="1">
    <source>
        <dbReference type="UniProtKB" id="Q47319"/>
    </source>
</evidence>
<evidence type="ECO:0000250" key="2">
    <source>
        <dbReference type="UniProtKB" id="Q8NBA8"/>
    </source>
</evidence>
<evidence type="ECO:0000256" key="3">
    <source>
        <dbReference type="SAM" id="MobiDB-lite"/>
    </source>
</evidence>
<evidence type="ECO:0000305" key="4"/>
<evidence type="ECO:0000312" key="5">
    <source>
        <dbReference type="MGI" id="MGI:1916107"/>
    </source>
</evidence>
<sequence length="298" mass="33102">MEPQAEERTLGEPAPPPSGALASPTPDEEERTEGGAPPTATPAGASGDSTSADGLWGLPVEHAERRPECGRCSRPQKVCLCPYLPVRPLQISTHLYIIQHPAEESRVLRTVPLLAACLPPDRCTVKIGRRFSEERDVELATVCRDSGTLILYPGAEATNLEEFILDSPVYPSTIILIDGTWSQAKDIFYKNSLFRLPKQVQLKTSVCSQYVIRMQPTNRCLSTLECAAVALSILEKNNCIQETLLRPLQALCSFQLQHGAQIRLSKEYLLRNGLYPKPMPKNKRKLRKMELLMNSVKI</sequence>
<keyword id="KW-0007">Acetylation</keyword>
<keyword id="KW-0963">Cytoplasm</keyword>
<keyword id="KW-0539">Nucleus</keyword>
<keyword id="KW-0597">Phosphoprotein</keyword>
<keyword id="KW-1185">Reference proteome</keyword>
<keyword id="KW-0949">S-adenosyl-L-methionine</keyword>
<keyword id="KW-0808">Transferase</keyword>
<keyword id="KW-0819">tRNA processing</keyword>
<dbReference type="EC" id="2.5.1.25" evidence="2"/>
<dbReference type="EMBL" id="AK004450">
    <property type="protein sequence ID" value="BAB23309.1"/>
    <property type="molecule type" value="mRNA"/>
</dbReference>
<dbReference type="EMBL" id="AK144689">
    <property type="protein sequence ID" value="BAE26015.1"/>
    <property type="molecule type" value="mRNA"/>
</dbReference>
<dbReference type="CCDS" id="CCDS37815.1"/>
<dbReference type="RefSeq" id="NP_001164431.1">
    <property type="nucleotide sequence ID" value="NM_001170960.1"/>
</dbReference>
<dbReference type="RefSeq" id="NP_081130.1">
    <property type="nucleotide sequence ID" value="NM_026854.3"/>
</dbReference>
<dbReference type="FunCoup" id="Q9D0U1">
    <property type="interactions" value="3358"/>
</dbReference>
<dbReference type="STRING" id="10090.ENSMUSP00000128219"/>
<dbReference type="GlyGen" id="Q9D0U1">
    <property type="glycosylation" value="1 site"/>
</dbReference>
<dbReference type="PhosphoSitePlus" id="Q9D0U1"/>
<dbReference type="PaxDb" id="10090-ENSMUSP00000025383"/>
<dbReference type="Antibodypedia" id="52885">
    <property type="antibodies" value="65 antibodies from 13 providers"/>
</dbReference>
<dbReference type="Ensembl" id="ENSMUST00000163590.9">
    <property type="protein sequence ID" value="ENSMUSP00000128219.3"/>
    <property type="gene ID" value="ENSMUSG00000024505.17"/>
</dbReference>
<dbReference type="GeneID" id="68857"/>
<dbReference type="KEGG" id="mmu:68857"/>
<dbReference type="UCSC" id="uc008ewl.2">
    <property type="organism name" value="mouse"/>
</dbReference>
<dbReference type="AGR" id="MGI:1916107"/>
<dbReference type="CTD" id="285605"/>
<dbReference type="MGI" id="MGI:1916107">
    <property type="gene designation" value="Dtwd2"/>
</dbReference>
<dbReference type="VEuPathDB" id="HostDB:ENSMUSG00000024505"/>
<dbReference type="eggNOG" id="KOG4382">
    <property type="taxonomic scope" value="Eukaryota"/>
</dbReference>
<dbReference type="GeneTree" id="ENSGT00390000006867"/>
<dbReference type="HOGENOM" id="CLU_066458_3_0_1"/>
<dbReference type="InParanoid" id="Q9D0U1"/>
<dbReference type="OMA" id="GTWRKAF"/>
<dbReference type="OrthoDB" id="408541at2759"/>
<dbReference type="PhylomeDB" id="Q9D0U1"/>
<dbReference type="TreeFam" id="TF324734"/>
<dbReference type="BioGRID-ORCS" id="68857">
    <property type="hits" value="2 hits in 77 CRISPR screens"/>
</dbReference>
<dbReference type="PRO" id="PR:Q9D0U1"/>
<dbReference type="Proteomes" id="UP000000589">
    <property type="component" value="Chromosome 18"/>
</dbReference>
<dbReference type="RNAct" id="Q9D0U1">
    <property type="molecule type" value="protein"/>
</dbReference>
<dbReference type="Bgee" id="ENSMUSG00000024505">
    <property type="expression patterns" value="Expressed in ectoplacental cone and 184 other cell types or tissues"/>
</dbReference>
<dbReference type="ExpressionAtlas" id="Q9D0U1">
    <property type="expression patterns" value="baseline and differential"/>
</dbReference>
<dbReference type="GO" id="GO:0005737">
    <property type="term" value="C:cytoplasm"/>
    <property type="evidence" value="ECO:0007669"/>
    <property type="project" value="UniProtKB-SubCell"/>
</dbReference>
<dbReference type="GO" id="GO:0005634">
    <property type="term" value="C:nucleus"/>
    <property type="evidence" value="ECO:0007669"/>
    <property type="project" value="UniProtKB-SubCell"/>
</dbReference>
<dbReference type="GO" id="GO:0016432">
    <property type="term" value="F:tRNA-uridine aminocarboxypropyltransferase activity"/>
    <property type="evidence" value="ECO:0000250"/>
    <property type="project" value="UniProtKB"/>
</dbReference>
<dbReference type="GO" id="GO:0141217">
    <property type="term" value="P:RNA glycosylation"/>
    <property type="evidence" value="ECO:0000250"/>
    <property type="project" value="UniProtKB"/>
</dbReference>
<dbReference type="GO" id="GO:0006400">
    <property type="term" value="P:tRNA modification"/>
    <property type="evidence" value="ECO:0000250"/>
    <property type="project" value="UniProtKB"/>
</dbReference>
<dbReference type="InterPro" id="IPR005636">
    <property type="entry name" value="DTW"/>
</dbReference>
<dbReference type="InterPro" id="IPR039262">
    <property type="entry name" value="DTWD2/TAPT"/>
</dbReference>
<dbReference type="PANTHER" id="PTHR21392">
    <property type="entry name" value="TRNA-URIDINE AMINOCARBOXYPROPYLTRANSFERASE 2"/>
    <property type="match status" value="1"/>
</dbReference>
<dbReference type="PANTHER" id="PTHR21392:SF0">
    <property type="entry name" value="TRNA-URIDINE AMINOCARBOXYPROPYLTRANSFERASE 2"/>
    <property type="match status" value="1"/>
</dbReference>
<dbReference type="Pfam" id="PF03942">
    <property type="entry name" value="DTW"/>
    <property type="match status" value="1"/>
</dbReference>
<dbReference type="SMART" id="SM01144">
    <property type="entry name" value="DTW"/>
    <property type="match status" value="1"/>
</dbReference>
<name>DTWD2_MOUSE</name>
<protein>
    <recommendedName>
        <fullName evidence="4">tRNA-uridine aminocarboxypropyltransferase 2</fullName>
        <ecNumber evidence="2">2.5.1.25</ecNumber>
    </recommendedName>
    <alternativeName>
        <fullName>DTW domain-containing protein 2</fullName>
    </alternativeName>
</protein>
<reference key="1">
    <citation type="journal article" date="2005" name="Science">
        <title>The transcriptional landscape of the mammalian genome.</title>
        <authorList>
            <person name="Carninci P."/>
            <person name="Kasukawa T."/>
            <person name="Katayama S."/>
            <person name="Gough J."/>
            <person name="Frith M.C."/>
            <person name="Maeda N."/>
            <person name="Oyama R."/>
            <person name="Ravasi T."/>
            <person name="Lenhard B."/>
            <person name="Wells C."/>
            <person name="Kodzius R."/>
            <person name="Shimokawa K."/>
            <person name="Bajic V.B."/>
            <person name="Brenner S.E."/>
            <person name="Batalov S."/>
            <person name="Forrest A.R."/>
            <person name="Zavolan M."/>
            <person name="Davis M.J."/>
            <person name="Wilming L.G."/>
            <person name="Aidinis V."/>
            <person name="Allen J.E."/>
            <person name="Ambesi-Impiombato A."/>
            <person name="Apweiler R."/>
            <person name="Aturaliya R.N."/>
            <person name="Bailey T.L."/>
            <person name="Bansal M."/>
            <person name="Baxter L."/>
            <person name="Beisel K.W."/>
            <person name="Bersano T."/>
            <person name="Bono H."/>
            <person name="Chalk A.M."/>
            <person name="Chiu K.P."/>
            <person name="Choudhary V."/>
            <person name="Christoffels A."/>
            <person name="Clutterbuck D.R."/>
            <person name="Crowe M.L."/>
            <person name="Dalla E."/>
            <person name="Dalrymple B.P."/>
            <person name="de Bono B."/>
            <person name="Della Gatta G."/>
            <person name="di Bernardo D."/>
            <person name="Down T."/>
            <person name="Engstrom P."/>
            <person name="Fagiolini M."/>
            <person name="Faulkner G."/>
            <person name="Fletcher C.F."/>
            <person name="Fukushima T."/>
            <person name="Furuno M."/>
            <person name="Futaki S."/>
            <person name="Gariboldi M."/>
            <person name="Georgii-Hemming P."/>
            <person name="Gingeras T.R."/>
            <person name="Gojobori T."/>
            <person name="Green R.E."/>
            <person name="Gustincich S."/>
            <person name="Harbers M."/>
            <person name="Hayashi Y."/>
            <person name="Hensch T.K."/>
            <person name="Hirokawa N."/>
            <person name="Hill D."/>
            <person name="Huminiecki L."/>
            <person name="Iacono M."/>
            <person name="Ikeo K."/>
            <person name="Iwama A."/>
            <person name="Ishikawa T."/>
            <person name="Jakt M."/>
            <person name="Kanapin A."/>
            <person name="Katoh M."/>
            <person name="Kawasawa Y."/>
            <person name="Kelso J."/>
            <person name="Kitamura H."/>
            <person name="Kitano H."/>
            <person name="Kollias G."/>
            <person name="Krishnan S.P."/>
            <person name="Kruger A."/>
            <person name="Kummerfeld S.K."/>
            <person name="Kurochkin I.V."/>
            <person name="Lareau L.F."/>
            <person name="Lazarevic D."/>
            <person name="Lipovich L."/>
            <person name="Liu J."/>
            <person name="Liuni S."/>
            <person name="McWilliam S."/>
            <person name="Madan Babu M."/>
            <person name="Madera M."/>
            <person name="Marchionni L."/>
            <person name="Matsuda H."/>
            <person name="Matsuzawa S."/>
            <person name="Miki H."/>
            <person name="Mignone F."/>
            <person name="Miyake S."/>
            <person name="Morris K."/>
            <person name="Mottagui-Tabar S."/>
            <person name="Mulder N."/>
            <person name="Nakano N."/>
            <person name="Nakauchi H."/>
            <person name="Ng P."/>
            <person name="Nilsson R."/>
            <person name="Nishiguchi S."/>
            <person name="Nishikawa S."/>
            <person name="Nori F."/>
            <person name="Ohara O."/>
            <person name="Okazaki Y."/>
            <person name="Orlando V."/>
            <person name="Pang K.C."/>
            <person name="Pavan W.J."/>
            <person name="Pavesi G."/>
            <person name="Pesole G."/>
            <person name="Petrovsky N."/>
            <person name="Piazza S."/>
            <person name="Reed J."/>
            <person name="Reid J.F."/>
            <person name="Ring B.Z."/>
            <person name="Ringwald M."/>
            <person name="Rost B."/>
            <person name="Ruan Y."/>
            <person name="Salzberg S.L."/>
            <person name="Sandelin A."/>
            <person name="Schneider C."/>
            <person name="Schoenbach C."/>
            <person name="Sekiguchi K."/>
            <person name="Semple C.A."/>
            <person name="Seno S."/>
            <person name="Sessa L."/>
            <person name="Sheng Y."/>
            <person name="Shibata Y."/>
            <person name="Shimada H."/>
            <person name="Shimada K."/>
            <person name="Silva D."/>
            <person name="Sinclair B."/>
            <person name="Sperling S."/>
            <person name="Stupka E."/>
            <person name="Sugiura K."/>
            <person name="Sultana R."/>
            <person name="Takenaka Y."/>
            <person name="Taki K."/>
            <person name="Tammoja K."/>
            <person name="Tan S.L."/>
            <person name="Tang S."/>
            <person name="Taylor M.S."/>
            <person name="Tegner J."/>
            <person name="Teichmann S.A."/>
            <person name="Ueda H.R."/>
            <person name="van Nimwegen E."/>
            <person name="Verardo R."/>
            <person name="Wei C.L."/>
            <person name="Yagi K."/>
            <person name="Yamanishi H."/>
            <person name="Zabarovsky E."/>
            <person name="Zhu S."/>
            <person name="Zimmer A."/>
            <person name="Hide W."/>
            <person name="Bult C."/>
            <person name="Grimmond S.M."/>
            <person name="Teasdale R.D."/>
            <person name="Liu E.T."/>
            <person name="Brusic V."/>
            <person name="Quackenbush J."/>
            <person name="Wahlestedt C."/>
            <person name="Mattick J.S."/>
            <person name="Hume D.A."/>
            <person name="Kai C."/>
            <person name="Sasaki D."/>
            <person name="Tomaru Y."/>
            <person name="Fukuda S."/>
            <person name="Kanamori-Katayama M."/>
            <person name="Suzuki M."/>
            <person name="Aoki J."/>
            <person name="Arakawa T."/>
            <person name="Iida J."/>
            <person name="Imamura K."/>
            <person name="Itoh M."/>
            <person name="Kato T."/>
            <person name="Kawaji H."/>
            <person name="Kawagashira N."/>
            <person name="Kawashima T."/>
            <person name="Kojima M."/>
            <person name="Kondo S."/>
            <person name="Konno H."/>
            <person name="Nakano K."/>
            <person name="Ninomiya N."/>
            <person name="Nishio T."/>
            <person name="Okada M."/>
            <person name="Plessy C."/>
            <person name="Shibata K."/>
            <person name="Shiraki T."/>
            <person name="Suzuki S."/>
            <person name="Tagami M."/>
            <person name="Waki K."/>
            <person name="Watahiki A."/>
            <person name="Okamura-Oho Y."/>
            <person name="Suzuki H."/>
            <person name="Kawai J."/>
            <person name="Hayashizaki Y."/>
        </authorList>
    </citation>
    <scope>NUCLEOTIDE SEQUENCE [LARGE SCALE MRNA]</scope>
    <source>
        <strain>C57BL/6J</strain>
        <tissue>Embryo</tissue>
        <tissue>Lung</tissue>
    </source>
</reference>
<feature type="chain" id="PRO_0000271130" description="tRNA-uridine aminocarboxypropyltransferase 2">
    <location>
        <begin position="1"/>
        <end position="298"/>
    </location>
</feature>
<feature type="region of interest" description="Disordered" evidence="3">
    <location>
        <begin position="1"/>
        <end position="55"/>
    </location>
</feature>
<feature type="short sequence motif" description="DXTW" evidence="1">
    <location>
        <begin position="178"/>
        <end position="181"/>
    </location>
</feature>
<feature type="compositionally biased region" description="Basic and acidic residues" evidence="3">
    <location>
        <begin position="1"/>
        <end position="10"/>
    </location>
</feature>
<feature type="compositionally biased region" description="Low complexity" evidence="3">
    <location>
        <begin position="34"/>
        <end position="45"/>
    </location>
</feature>
<feature type="modified residue" description="N-acetylmethionine" evidence="2">
    <location>
        <position position="1"/>
    </location>
</feature>
<feature type="modified residue" description="Phosphoserine" evidence="2">
    <location>
        <position position="132"/>
    </location>
</feature>
<proteinExistence type="evidence at transcript level"/>